<protein>
    <recommendedName>
        <fullName evidence="1">ATP synthase subunit b</fullName>
    </recommendedName>
    <alternativeName>
        <fullName evidence="1">ATP synthase F(0) sector subunit b</fullName>
    </alternativeName>
    <alternativeName>
        <fullName evidence="1">ATPase subunit I</fullName>
    </alternativeName>
    <alternativeName>
        <fullName evidence="1">F-type ATPase subunit b</fullName>
        <shortName evidence="1">F-ATPase subunit b</shortName>
    </alternativeName>
</protein>
<comment type="function">
    <text evidence="1">F(1)F(0) ATP synthase produces ATP from ADP in the presence of a proton or sodium gradient. F-type ATPases consist of two structural domains, F(1) containing the extramembraneous catalytic core and F(0) containing the membrane proton channel, linked together by a central stalk and a peripheral stalk. During catalysis, ATP synthesis in the catalytic domain of F(1) is coupled via a rotary mechanism of the central stalk subunits to proton translocation.</text>
</comment>
<comment type="function">
    <text evidence="1">Component of the F(0) channel, it forms part of the peripheral stalk, linking F(1) to F(0).</text>
</comment>
<comment type="subunit">
    <text evidence="1">F-type ATPases have 2 components, F(1) - the catalytic core - and F(0) - the membrane proton channel. F(1) has five subunits: alpha(3), beta(3), gamma(1), delta(1), epsilon(1). F(0) has three main subunits: a(1), b(2) and c(10-14). The alpha and beta chains form an alternating ring which encloses part of the gamma chain. F(1) is attached to F(0) by a central stalk formed by the gamma and epsilon chains, while a peripheral stalk is formed by the delta and b chains.</text>
</comment>
<comment type="subcellular location">
    <subcellularLocation>
        <location evidence="1">Cell inner membrane</location>
        <topology evidence="1">Single-pass membrane protein</topology>
    </subcellularLocation>
</comment>
<comment type="similarity">
    <text evidence="1">Belongs to the ATPase B chain family.</text>
</comment>
<proteinExistence type="inferred from homology"/>
<gene>
    <name evidence="1" type="primary">atpF</name>
    <name type="ordered locus">FTM_0124</name>
</gene>
<keyword id="KW-0066">ATP synthesis</keyword>
<keyword id="KW-0997">Cell inner membrane</keyword>
<keyword id="KW-1003">Cell membrane</keyword>
<keyword id="KW-0138">CF(0)</keyword>
<keyword id="KW-0375">Hydrogen ion transport</keyword>
<keyword id="KW-0406">Ion transport</keyword>
<keyword id="KW-0472">Membrane</keyword>
<keyword id="KW-0812">Transmembrane</keyword>
<keyword id="KW-1133">Transmembrane helix</keyword>
<keyword id="KW-0813">Transport</keyword>
<feature type="chain" id="PRO_0000368491" description="ATP synthase subunit b">
    <location>
        <begin position="1"/>
        <end position="156"/>
    </location>
</feature>
<feature type="transmembrane region" description="Helical" evidence="1">
    <location>
        <begin position="5"/>
        <end position="27"/>
    </location>
</feature>
<accession>B2SEX7</accession>
<reference key="1">
    <citation type="journal article" date="2009" name="PLoS Pathog.">
        <title>Molecular evolutionary consequences of niche restriction in Francisella tularensis, a facultative intracellular pathogen.</title>
        <authorList>
            <person name="Larsson P."/>
            <person name="Elfsmark D."/>
            <person name="Svensson K."/>
            <person name="Wikstroem P."/>
            <person name="Forsman M."/>
            <person name="Brettin T."/>
            <person name="Keim P."/>
            <person name="Johansson A."/>
        </authorList>
    </citation>
    <scope>NUCLEOTIDE SEQUENCE [LARGE SCALE GENOMIC DNA]</scope>
    <source>
        <strain>FSC147</strain>
    </source>
</reference>
<evidence type="ECO:0000255" key="1">
    <source>
        <dbReference type="HAMAP-Rule" id="MF_01398"/>
    </source>
</evidence>
<organism>
    <name type="scientific">Francisella tularensis subsp. mediasiatica (strain FSC147)</name>
    <dbReference type="NCBI Taxonomy" id="441952"/>
    <lineage>
        <taxon>Bacteria</taxon>
        <taxon>Pseudomonadati</taxon>
        <taxon>Pseudomonadota</taxon>
        <taxon>Gammaproteobacteria</taxon>
        <taxon>Thiotrichales</taxon>
        <taxon>Francisellaceae</taxon>
        <taxon>Francisella</taxon>
    </lineage>
</organism>
<sequence>MDINITLIGQMITFAIFVGFTMKFVWPPLRKALEERREKIAEGLASADRASRELEVAKRQSAEILREAKAKATEIVENAYVRAHKVDEQAKEEAIAAADKIKSMAIAEIEQEKVKAKEQLKQELVNLAMAAASKIIAASVDEKASKKVLEDFVEKV</sequence>
<dbReference type="EMBL" id="CP000915">
    <property type="protein sequence ID" value="ACD30222.1"/>
    <property type="molecule type" value="Genomic_DNA"/>
</dbReference>
<dbReference type="SMR" id="B2SEX7"/>
<dbReference type="KEGG" id="ftm:FTM_0124"/>
<dbReference type="HOGENOM" id="CLU_079215_4_5_6"/>
<dbReference type="GO" id="GO:0005886">
    <property type="term" value="C:plasma membrane"/>
    <property type="evidence" value="ECO:0007669"/>
    <property type="project" value="UniProtKB-SubCell"/>
</dbReference>
<dbReference type="GO" id="GO:0045259">
    <property type="term" value="C:proton-transporting ATP synthase complex"/>
    <property type="evidence" value="ECO:0007669"/>
    <property type="project" value="UniProtKB-KW"/>
</dbReference>
<dbReference type="GO" id="GO:0046933">
    <property type="term" value="F:proton-transporting ATP synthase activity, rotational mechanism"/>
    <property type="evidence" value="ECO:0007669"/>
    <property type="project" value="UniProtKB-UniRule"/>
</dbReference>
<dbReference type="GO" id="GO:0046961">
    <property type="term" value="F:proton-transporting ATPase activity, rotational mechanism"/>
    <property type="evidence" value="ECO:0007669"/>
    <property type="project" value="TreeGrafter"/>
</dbReference>
<dbReference type="CDD" id="cd06503">
    <property type="entry name" value="ATP-synt_Fo_b"/>
    <property type="match status" value="1"/>
</dbReference>
<dbReference type="Gene3D" id="6.10.250.1580">
    <property type="match status" value="1"/>
</dbReference>
<dbReference type="HAMAP" id="MF_01398">
    <property type="entry name" value="ATP_synth_b_bprime"/>
    <property type="match status" value="1"/>
</dbReference>
<dbReference type="InterPro" id="IPR028987">
    <property type="entry name" value="ATP_synth_B-like_membr_sf"/>
</dbReference>
<dbReference type="InterPro" id="IPR002146">
    <property type="entry name" value="ATP_synth_b/b'su_bac/chlpt"/>
</dbReference>
<dbReference type="InterPro" id="IPR005864">
    <property type="entry name" value="ATP_synth_F0_bsu_bac"/>
</dbReference>
<dbReference type="InterPro" id="IPR050059">
    <property type="entry name" value="ATP_synthase_B_chain"/>
</dbReference>
<dbReference type="NCBIfam" id="TIGR01144">
    <property type="entry name" value="ATP_synt_b"/>
    <property type="match status" value="1"/>
</dbReference>
<dbReference type="NCBIfam" id="NF004411">
    <property type="entry name" value="PRK05759.1-2"/>
    <property type="match status" value="1"/>
</dbReference>
<dbReference type="PANTHER" id="PTHR33445:SF1">
    <property type="entry name" value="ATP SYNTHASE SUBUNIT B"/>
    <property type="match status" value="1"/>
</dbReference>
<dbReference type="PANTHER" id="PTHR33445">
    <property type="entry name" value="ATP SYNTHASE SUBUNIT B', CHLOROPLASTIC"/>
    <property type="match status" value="1"/>
</dbReference>
<dbReference type="Pfam" id="PF00430">
    <property type="entry name" value="ATP-synt_B"/>
    <property type="match status" value="1"/>
</dbReference>
<dbReference type="SUPFAM" id="SSF81573">
    <property type="entry name" value="F1F0 ATP synthase subunit B, membrane domain"/>
    <property type="match status" value="1"/>
</dbReference>
<name>ATPF_FRATM</name>